<reference key="1">
    <citation type="journal article" date="2013" name="PLoS ONE">
        <title>Genomic and secretomic analyses reveal unique features of the lignocellulolytic enzyme system of Penicillium decumbens.</title>
        <authorList>
            <person name="Liu G."/>
            <person name="Zhang L."/>
            <person name="Wei X."/>
            <person name="Zou G."/>
            <person name="Qin Y."/>
            <person name="Ma L."/>
            <person name="Li J."/>
            <person name="Zheng H."/>
            <person name="Wang S."/>
            <person name="Wang C."/>
            <person name="Xun L."/>
            <person name="Zhao G.-P."/>
            <person name="Zhou Z."/>
            <person name="Qu Y."/>
        </authorList>
    </citation>
    <scope>NUCLEOTIDE SEQUENCE [LARGE SCALE GENOMIC DNA]</scope>
    <source>
        <strain>114-2 / CGMCC 5302</strain>
    </source>
</reference>
<reference key="2">
    <citation type="journal article" date="2022" name="Mar. Drugs">
        <title>Identification of PKS-NRPS Hybrid Metabolites in Marine-Derived Penicillium oxalicum.</title>
        <authorList>
            <person name="Li H."/>
            <person name="Zhang W."/>
            <person name="Zhang X."/>
            <person name="Tang S."/>
            <person name="Men P."/>
            <person name="Xiong M."/>
            <person name="Li Z."/>
            <person name="Zhang Y."/>
            <person name="Huang X."/>
            <person name="Lu X."/>
        </authorList>
    </citation>
    <scope>FUNCTION</scope>
    <scope>DISRUPTION PHENOTYPE</scope>
</reference>
<organism>
    <name type="scientific">Penicillium oxalicum (strain 114-2 / CGMCC 5302)</name>
    <name type="common">Penicillium decumbens</name>
    <dbReference type="NCBI Taxonomy" id="933388"/>
    <lineage>
        <taxon>Eukaryota</taxon>
        <taxon>Fungi</taxon>
        <taxon>Dikarya</taxon>
        <taxon>Ascomycota</taxon>
        <taxon>Pezizomycotina</taxon>
        <taxon>Eurotiomycetes</taxon>
        <taxon>Eurotiomycetidae</taxon>
        <taxon>Eurotiales</taxon>
        <taxon>Aspergillaceae</taxon>
        <taxon>Penicillium</taxon>
    </lineage>
</organism>
<name>OPDE_PENO1</name>
<dbReference type="EC" id="1.-.-.-" evidence="6"/>
<dbReference type="EMBL" id="KB644408">
    <property type="protein sequence ID" value="EPS26300.1"/>
    <property type="molecule type" value="Genomic_DNA"/>
</dbReference>
<dbReference type="SMR" id="S7Z6X4"/>
<dbReference type="STRING" id="933388.S7Z6X4"/>
<dbReference type="eggNOG" id="KOG0157">
    <property type="taxonomic scope" value="Eukaryota"/>
</dbReference>
<dbReference type="HOGENOM" id="CLU_001570_27_0_1"/>
<dbReference type="OrthoDB" id="1470350at2759"/>
<dbReference type="PhylomeDB" id="S7Z6X4"/>
<dbReference type="Proteomes" id="UP000019376">
    <property type="component" value="Unassembled WGS sequence"/>
</dbReference>
<dbReference type="GO" id="GO:0016020">
    <property type="term" value="C:membrane"/>
    <property type="evidence" value="ECO:0007669"/>
    <property type="project" value="UniProtKB-SubCell"/>
</dbReference>
<dbReference type="GO" id="GO:0020037">
    <property type="term" value="F:heme binding"/>
    <property type="evidence" value="ECO:0007669"/>
    <property type="project" value="InterPro"/>
</dbReference>
<dbReference type="GO" id="GO:0005506">
    <property type="term" value="F:iron ion binding"/>
    <property type="evidence" value="ECO:0007669"/>
    <property type="project" value="InterPro"/>
</dbReference>
<dbReference type="GO" id="GO:0016712">
    <property type="term" value="F:oxidoreductase activity, acting on paired donors, with incorporation or reduction of molecular oxygen, reduced flavin or flavoprotein as one donor, and incorporation of one atom of oxygen"/>
    <property type="evidence" value="ECO:0007669"/>
    <property type="project" value="InterPro"/>
</dbReference>
<dbReference type="GO" id="GO:0043386">
    <property type="term" value="P:mycotoxin biosynthetic process"/>
    <property type="evidence" value="ECO:0007669"/>
    <property type="project" value="UniProtKB-ARBA"/>
</dbReference>
<dbReference type="Gene3D" id="1.10.630.10">
    <property type="entry name" value="Cytochrome P450"/>
    <property type="match status" value="1"/>
</dbReference>
<dbReference type="InterPro" id="IPR001128">
    <property type="entry name" value="Cyt_P450"/>
</dbReference>
<dbReference type="InterPro" id="IPR017972">
    <property type="entry name" value="Cyt_P450_CS"/>
</dbReference>
<dbReference type="InterPro" id="IPR002974">
    <property type="entry name" value="Cyt_P450_E_CYP52_ascomycetes"/>
</dbReference>
<dbReference type="InterPro" id="IPR047146">
    <property type="entry name" value="Cyt_P450_E_CYP52_fungi"/>
</dbReference>
<dbReference type="InterPro" id="IPR036396">
    <property type="entry name" value="Cyt_P450_sf"/>
</dbReference>
<dbReference type="PANTHER" id="PTHR24287:SF18">
    <property type="entry name" value="CYTOCHROME P450 MONOOXYGENASE APDE-RELATED"/>
    <property type="match status" value="1"/>
</dbReference>
<dbReference type="PANTHER" id="PTHR24287">
    <property type="entry name" value="P450, PUTATIVE (EUROFUNG)-RELATED"/>
    <property type="match status" value="1"/>
</dbReference>
<dbReference type="Pfam" id="PF00067">
    <property type="entry name" value="p450"/>
    <property type="match status" value="1"/>
</dbReference>
<dbReference type="PRINTS" id="PR01239">
    <property type="entry name" value="EP450IICYP52"/>
</dbReference>
<dbReference type="SUPFAM" id="SSF48264">
    <property type="entry name" value="Cytochrome P450"/>
    <property type="match status" value="1"/>
</dbReference>
<dbReference type="PROSITE" id="PS00086">
    <property type="entry name" value="CYTOCHROME_P450"/>
    <property type="match status" value="1"/>
</dbReference>
<sequence length="475" mass="55196">MLVQYQNLPVQNIPVLLLSCGFLAILFRSLVLRVRYYRKAQAWGCKPVPSRFQWDPFWGLDLVWSQWKALRGHYYIPWLSDLHKGQPKTFQITFQGARVIHTIEPENLKCLTAINWKDFGISPLRRGKKAGHPFADRGVNSVDGEDWVFSRSLIKPFFMREVYANTERLLPHTDHLLRIMPPDGETFNIQPYLQRWFLDVTTQFIFGAPMDALTHPERARVTWAMLDVLRGTRLRLQLYRVMHLIDWSWWLRAIKIIHEFMDERIDRVYADIAEHQKRIQAGEDVGPERLDLLWHMALGCPDHVELRSQLSLLFVPNNDTTSILTANVIWHLARNSKAWGKVRAEVLAHGDAPLTFEALRGMKYLQASINETHRLNPNNVTQVRMCVNDTTLPLGGGTDGRSPILIRKGDIVQVTKTVMQKDPLYWGEDPDVYRPERFEEKTHFWEFVPFGGGPRRCPAHMMVQTESAYLIARLA</sequence>
<accession>S7Z6X4</accession>
<comment type="function">
    <text evidence="3 5">Cytochrome P450 monooxygenase; part of the gene cluster that mediates the biosynthesis of oxopyrrolidines, polyketide-amino acid hybrid compounds with feature structures of tetramic acid (PubMed:36005526). Does not seem to play a role in oxopyrrolidines A and B biosynthesis (PubMed:36005526). May be involved in further modifications of these oxopyrrolidines (Probable).</text>
</comment>
<comment type="cofactor">
    <cofactor evidence="1">
        <name>heme</name>
        <dbReference type="ChEBI" id="CHEBI:30413"/>
    </cofactor>
</comment>
<comment type="pathway">
    <text evidence="6">Secondary metabolite biosynthesis.</text>
</comment>
<comment type="subcellular location">
    <subcellularLocation>
        <location evidence="2">Membrane</location>
        <topology evidence="2">Single-pass membrane protein</topology>
    </subcellularLocation>
</comment>
<comment type="disruption phenotype">
    <text evidence="3">Does not affect the production of oxopyrrolidines A and B.</text>
</comment>
<comment type="similarity">
    <text evidence="5">Belongs to the cytochrome P450 family.</text>
</comment>
<feature type="chain" id="PRO_0000457065" description="Cytochrome P450 monooxygenase opdE">
    <location>
        <begin position="1"/>
        <end position="475"/>
    </location>
</feature>
<feature type="transmembrane region" description="Helical" evidence="2">
    <location>
        <begin position="10"/>
        <end position="32"/>
    </location>
</feature>
<feature type="binding site" description="axial binding residue" evidence="1">
    <location>
        <position position="457"/>
    </location>
    <ligand>
        <name>heme</name>
        <dbReference type="ChEBI" id="CHEBI:30413"/>
    </ligand>
    <ligandPart>
        <name>Fe</name>
        <dbReference type="ChEBI" id="CHEBI:18248"/>
    </ligandPart>
</feature>
<keyword id="KW-0349">Heme</keyword>
<keyword id="KW-0408">Iron</keyword>
<keyword id="KW-0472">Membrane</keyword>
<keyword id="KW-0479">Metal-binding</keyword>
<keyword id="KW-0503">Monooxygenase</keyword>
<keyword id="KW-0560">Oxidoreductase</keyword>
<keyword id="KW-1185">Reference proteome</keyword>
<keyword id="KW-0812">Transmembrane</keyword>
<keyword id="KW-1133">Transmembrane helix</keyword>
<proteinExistence type="inferred from homology"/>
<protein>
    <recommendedName>
        <fullName evidence="4">Cytochrome P450 monooxygenase opdE</fullName>
        <ecNumber evidence="6">1.-.-.-</ecNumber>
    </recommendedName>
    <alternativeName>
        <fullName evidence="4">Oxopyrrolidines biosynthesis cluster protein E</fullName>
    </alternativeName>
</protein>
<evidence type="ECO:0000250" key="1">
    <source>
        <dbReference type="UniProtKB" id="P04798"/>
    </source>
</evidence>
<evidence type="ECO:0000255" key="2"/>
<evidence type="ECO:0000269" key="3">
    <source>
    </source>
</evidence>
<evidence type="ECO:0000303" key="4">
    <source>
    </source>
</evidence>
<evidence type="ECO:0000305" key="5"/>
<evidence type="ECO:0000305" key="6">
    <source>
    </source>
</evidence>
<gene>
    <name evidence="4" type="primary">opdE</name>
    <name type="ORF">PDE_01236</name>
</gene>